<name>GLYA_CLOBH</name>
<protein>
    <recommendedName>
        <fullName evidence="1">Serine hydroxymethyltransferase</fullName>
        <shortName evidence="1">SHMT</shortName>
        <shortName evidence="1">Serine methylase</shortName>
        <ecNumber evidence="1">2.1.2.1</ecNumber>
    </recommendedName>
</protein>
<proteinExistence type="inferred from homology"/>
<keyword id="KW-0028">Amino-acid biosynthesis</keyword>
<keyword id="KW-0963">Cytoplasm</keyword>
<keyword id="KW-0554">One-carbon metabolism</keyword>
<keyword id="KW-0663">Pyridoxal phosphate</keyword>
<keyword id="KW-1185">Reference proteome</keyword>
<keyword id="KW-0808">Transferase</keyword>
<sequence length="413" mass="46354">MDFTNLKNTDPELLDMIKKEEERQEYNIELIASENFTSLSVMESMGSLLTNKYAEGYPHKRYYGGCEFVDEVEDLARERLKKLFAAEHANVQPHSGSQANMAVYMSVLQTGDTILGMDLSHGGHLTHGSPVNFSGKLYNFISYGVDKETETIDYEKLKKIALENRPKMIVSGASAYPRIIDFQKIREICDEIDAYMMVDMAHIAGLVATGLHPSPVPYADFVTTTTHKTLRGPRGGAILCKEKYAKAVDKAIFPGIQGGPLMHTIAAKAVCFGEALREDYKEYMQQVVKNTKVLGEELKNYGFRLISGGTDNHLLLIDLTNKNITGKDAEKLLDSVGITVNKNTIPFETLSPFITSGIRIGTPAVTTRGFKEEEMKKIAYFMNYSIEHREENLSQIKEQIKEICKKYPLYQNA</sequence>
<feature type="chain" id="PRO_1000006237" description="Serine hydroxymethyltransferase">
    <location>
        <begin position="1"/>
        <end position="413"/>
    </location>
</feature>
<feature type="binding site" evidence="1">
    <location>
        <position position="119"/>
    </location>
    <ligand>
        <name>(6S)-5,6,7,8-tetrahydrofolate</name>
        <dbReference type="ChEBI" id="CHEBI:57453"/>
    </ligand>
</feature>
<feature type="binding site" evidence="1">
    <location>
        <begin position="123"/>
        <end position="125"/>
    </location>
    <ligand>
        <name>(6S)-5,6,7,8-tetrahydrofolate</name>
        <dbReference type="ChEBI" id="CHEBI:57453"/>
    </ligand>
</feature>
<feature type="binding site" evidence="1">
    <location>
        <begin position="351"/>
        <end position="353"/>
    </location>
    <ligand>
        <name>(6S)-5,6,7,8-tetrahydrofolate</name>
        <dbReference type="ChEBI" id="CHEBI:57453"/>
    </ligand>
</feature>
<feature type="site" description="Plays an important role in substrate specificity" evidence="1">
    <location>
        <position position="227"/>
    </location>
</feature>
<feature type="modified residue" description="N6-(pyridoxal phosphate)lysine" evidence="1">
    <location>
        <position position="228"/>
    </location>
</feature>
<comment type="function">
    <text evidence="1">Catalyzes the reversible interconversion of serine and glycine with tetrahydrofolate (THF) serving as the one-carbon carrier. This reaction serves as the major source of one-carbon groups required for the biosynthesis of purines, thymidylate, methionine, and other important biomolecules. Also exhibits THF-independent aldolase activity toward beta-hydroxyamino acids, producing glycine and aldehydes, via a retro-aldol mechanism.</text>
</comment>
<comment type="catalytic activity">
    <reaction evidence="1">
        <text>(6R)-5,10-methylene-5,6,7,8-tetrahydrofolate + glycine + H2O = (6S)-5,6,7,8-tetrahydrofolate + L-serine</text>
        <dbReference type="Rhea" id="RHEA:15481"/>
        <dbReference type="ChEBI" id="CHEBI:15377"/>
        <dbReference type="ChEBI" id="CHEBI:15636"/>
        <dbReference type="ChEBI" id="CHEBI:33384"/>
        <dbReference type="ChEBI" id="CHEBI:57305"/>
        <dbReference type="ChEBI" id="CHEBI:57453"/>
        <dbReference type="EC" id="2.1.2.1"/>
    </reaction>
</comment>
<comment type="cofactor">
    <cofactor evidence="1">
        <name>pyridoxal 5'-phosphate</name>
        <dbReference type="ChEBI" id="CHEBI:597326"/>
    </cofactor>
</comment>
<comment type="pathway">
    <text evidence="1">One-carbon metabolism; tetrahydrofolate interconversion.</text>
</comment>
<comment type="pathway">
    <text evidence="1">Amino-acid biosynthesis; glycine biosynthesis; glycine from L-serine: step 1/1.</text>
</comment>
<comment type="subunit">
    <text evidence="1">Homodimer.</text>
</comment>
<comment type="subcellular location">
    <subcellularLocation>
        <location evidence="1">Cytoplasm</location>
    </subcellularLocation>
</comment>
<comment type="similarity">
    <text evidence="1">Belongs to the SHMT family.</text>
</comment>
<reference key="1">
    <citation type="journal article" date="2007" name="Genome Res.">
        <title>Genome sequence of a proteolytic (Group I) Clostridium botulinum strain Hall A and comparative analysis of the clostridial genomes.</title>
        <authorList>
            <person name="Sebaihia M."/>
            <person name="Peck M.W."/>
            <person name="Minton N.P."/>
            <person name="Thomson N.R."/>
            <person name="Holden M.T.G."/>
            <person name="Mitchell W.J."/>
            <person name="Carter A.T."/>
            <person name="Bentley S.D."/>
            <person name="Mason D.R."/>
            <person name="Crossman L."/>
            <person name="Paul C.J."/>
            <person name="Ivens A."/>
            <person name="Wells-Bennik M.H.J."/>
            <person name="Davis I.J."/>
            <person name="Cerdeno-Tarraga A.M."/>
            <person name="Churcher C."/>
            <person name="Quail M.A."/>
            <person name="Chillingworth T."/>
            <person name="Feltwell T."/>
            <person name="Fraser A."/>
            <person name="Goodhead I."/>
            <person name="Hance Z."/>
            <person name="Jagels K."/>
            <person name="Larke N."/>
            <person name="Maddison M."/>
            <person name="Moule S."/>
            <person name="Mungall K."/>
            <person name="Norbertczak H."/>
            <person name="Rabbinowitsch E."/>
            <person name="Sanders M."/>
            <person name="Simmonds M."/>
            <person name="White B."/>
            <person name="Whithead S."/>
            <person name="Parkhill J."/>
        </authorList>
    </citation>
    <scope>NUCLEOTIDE SEQUENCE [LARGE SCALE GENOMIC DNA]</scope>
    <source>
        <strain>Hall / ATCC 3502 / NCTC 13319 / Type A</strain>
    </source>
</reference>
<reference key="2">
    <citation type="journal article" date="2007" name="PLoS ONE">
        <title>Analysis of the neurotoxin complex genes in Clostridium botulinum A1-A4 and B1 strains: BoNT/A3, /Ba4 and /B1 clusters are located within plasmids.</title>
        <authorList>
            <person name="Smith T.J."/>
            <person name="Hill K.K."/>
            <person name="Foley B.T."/>
            <person name="Detter J.C."/>
            <person name="Munk A.C."/>
            <person name="Bruce D.C."/>
            <person name="Doggett N.A."/>
            <person name="Smith L.A."/>
            <person name="Marks J.D."/>
            <person name="Xie G."/>
            <person name="Brettin T.S."/>
        </authorList>
    </citation>
    <scope>NUCLEOTIDE SEQUENCE [LARGE SCALE GENOMIC DNA]</scope>
    <source>
        <strain>Hall / ATCC 3502 / NCTC 13319 / Type A</strain>
    </source>
</reference>
<accession>A5I526</accession>
<accession>A7G692</accession>
<dbReference type="EC" id="2.1.2.1" evidence="1"/>
<dbReference type="EMBL" id="CP000727">
    <property type="protein sequence ID" value="ABS37761.1"/>
    <property type="molecule type" value="Genomic_DNA"/>
</dbReference>
<dbReference type="EMBL" id="AM412317">
    <property type="protein sequence ID" value="CAL84153.1"/>
    <property type="molecule type" value="Genomic_DNA"/>
</dbReference>
<dbReference type="RefSeq" id="WP_011986909.1">
    <property type="nucleotide sequence ID" value="NC_009698.1"/>
</dbReference>
<dbReference type="RefSeq" id="YP_001255091.1">
    <property type="nucleotide sequence ID" value="NC_009495.1"/>
</dbReference>
<dbReference type="RefSeq" id="YP_001388307.1">
    <property type="nucleotide sequence ID" value="NC_009698.1"/>
</dbReference>
<dbReference type="SMR" id="A5I526"/>
<dbReference type="GeneID" id="5186850"/>
<dbReference type="KEGG" id="cbh:CLC_2467"/>
<dbReference type="KEGG" id="cbo:CBO2595"/>
<dbReference type="PATRIC" id="fig|413999.7.peg.2574"/>
<dbReference type="HOGENOM" id="CLU_022477_2_1_9"/>
<dbReference type="UniPathway" id="UPA00193"/>
<dbReference type="UniPathway" id="UPA00288">
    <property type="reaction ID" value="UER01023"/>
</dbReference>
<dbReference type="PRO" id="PR:A5I526"/>
<dbReference type="Proteomes" id="UP000001986">
    <property type="component" value="Chromosome"/>
</dbReference>
<dbReference type="GO" id="GO:0005737">
    <property type="term" value="C:cytoplasm"/>
    <property type="evidence" value="ECO:0000318"/>
    <property type="project" value="GO_Central"/>
</dbReference>
<dbReference type="GO" id="GO:0005829">
    <property type="term" value="C:cytosol"/>
    <property type="evidence" value="ECO:0000318"/>
    <property type="project" value="GO_Central"/>
</dbReference>
<dbReference type="GO" id="GO:0004372">
    <property type="term" value="F:glycine hydroxymethyltransferase activity"/>
    <property type="evidence" value="ECO:0000318"/>
    <property type="project" value="GO_Central"/>
</dbReference>
<dbReference type="GO" id="GO:0030170">
    <property type="term" value="F:pyridoxal phosphate binding"/>
    <property type="evidence" value="ECO:0000318"/>
    <property type="project" value="GO_Central"/>
</dbReference>
<dbReference type="GO" id="GO:0019264">
    <property type="term" value="P:glycine biosynthetic process from serine"/>
    <property type="evidence" value="ECO:0000318"/>
    <property type="project" value="GO_Central"/>
</dbReference>
<dbReference type="GO" id="GO:0035999">
    <property type="term" value="P:tetrahydrofolate interconversion"/>
    <property type="evidence" value="ECO:0007669"/>
    <property type="project" value="UniProtKB-UniRule"/>
</dbReference>
<dbReference type="GO" id="GO:0046653">
    <property type="term" value="P:tetrahydrofolate metabolic process"/>
    <property type="evidence" value="ECO:0000318"/>
    <property type="project" value="GO_Central"/>
</dbReference>
<dbReference type="CDD" id="cd00378">
    <property type="entry name" value="SHMT"/>
    <property type="match status" value="1"/>
</dbReference>
<dbReference type="FunFam" id="3.40.640.10:FF:000001">
    <property type="entry name" value="Serine hydroxymethyltransferase"/>
    <property type="match status" value="1"/>
</dbReference>
<dbReference type="FunFam" id="3.90.1150.10:FF:000003">
    <property type="entry name" value="Serine hydroxymethyltransferase"/>
    <property type="match status" value="1"/>
</dbReference>
<dbReference type="Gene3D" id="3.90.1150.10">
    <property type="entry name" value="Aspartate Aminotransferase, domain 1"/>
    <property type="match status" value="1"/>
</dbReference>
<dbReference type="Gene3D" id="3.40.640.10">
    <property type="entry name" value="Type I PLP-dependent aspartate aminotransferase-like (Major domain)"/>
    <property type="match status" value="1"/>
</dbReference>
<dbReference type="HAMAP" id="MF_00051">
    <property type="entry name" value="SHMT"/>
    <property type="match status" value="1"/>
</dbReference>
<dbReference type="InterPro" id="IPR015424">
    <property type="entry name" value="PyrdxlP-dep_Trfase"/>
</dbReference>
<dbReference type="InterPro" id="IPR015421">
    <property type="entry name" value="PyrdxlP-dep_Trfase_major"/>
</dbReference>
<dbReference type="InterPro" id="IPR015422">
    <property type="entry name" value="PyrdxlP-dep_Trfase_small"/>
</dbReference>
<dbReference type="InterPro" id="IPR001085">
    <property type="entry name" value="Ser_HO-MeTrfase"/>
</dbReference>
<dbReference type="InterPro" id="IPR049943">
    <property type="entry name" value="Ser_HO-MeTrfase-like"/>
</dbReference>
<dbReference type="InterPro" id="IPR019798">
    <property type="entry name" value="Ser_HO-MeTrfase_PLP_BS"/>
</dbReference>
<dbReference type="InterPro" id="IPR039429">
    <property type="entry name" value="SHMT-like_dom"/>
</dbReference>
<dbReference type="NCBIfam" id="NF000586">
    <property type="entry name" value="PRK00011.1"/>
    <property type="match status" value="1"/>
</dbReference>
<dbReference type="PANTHER" id="PTHR11680">
    <property type="entry name" value="SERINE HYDROXYMETHYLTRANSFERASE"/>
    <property type="match status" value="1"/>
</dbReference>
<dbReference type="PANTHER" id="PTHR11680:SF35">
    <property type="entry name" value="SERINE HYDROXYMETHYLTRANSFERASE 1"/>
    <property type="match status" value="1"/>
</dbReference>
<dbReference type="Pfam" id="PF00464">
    <property type="entry name" value="SHMT"/>
    <property type="match status" value="1"/>
</dbReference>
<dbReference type="PIRSF" id="PIRSF000412">
    <property type="entry name" value="SHMT"/>
    <property type="match status" value="1"/>
</dbReference>
<dbReference type="SUPFAM" id="SSF53383">
    <property type="entry name" value="PLP-dependent transferases"/>
    <property type="match status" value="1"/>
</dbReference>
<dbReference type="PROSITE" id="PS00096">
    <property type="entry name" value="SHMT"/>
    <property type="match status" value="1"/>
</dbReference>
<organism>
    <name type="scientific">Clostridium botulinum (strain Hall / ATCC 3502 / NCTC 13319 / Type A)</name>
    <dbReference type="NCBI Taxonomy" id="441771"/>
    <lineage>
        <taxon>Bacteria</taxon>
        <taxon>Bacillati</taxon>
        <taxon>Bacillota</taxon>
        <taxon>Clostridia</taxon>
        <taxon>Eubacteriales</taxon>
        <taxon>Clostridiaceae</taxon>
        <taxon>Clostridium</taxon>
    </lineage>
</organism>
<gene>
    <name evidence="1" type="primary">glyA</name>
    <name type="ordered locus">CBO2595</name>
    <name type="ordered locus">CLC_2467</name>
</gene>
<evidence type="ECO:0000255" key="1">
    <source>
        <dbReference type="HAMAP-Rule" id="MF_00051"/>
    </source>
</evidence>